<keyword id="KW-0066">ATP synthesis</keyword>
<keyword id="KW-1003">Cell membrane</keyword>
<keyword id="KW-0138">CF(0)</keyword>
<keyword id="KW-0375">Hydrogen ion transport</keyword>
<keyword id="KW-0406">Ion transport</keyword>
<keyword id="KW-0472">Membrane</keyword>
<keyword id="KW-0812">Transmembrane</keyword>
<keyword id="KW-1133">Transmembrane helix</keyword>
<keyword id="KW-0813">Transport</keyword>
<gene>
    <name evidence="1" type="primary">atpB</name>
    <name type="ordered locus">SZO_11680</name>
</gene>
<accession>C0MH74</accession>
<comment type="function">
    <text evidence="1">Key component of the proton channel; it plays a direct role in the translocation of protons across the membrane.</text>
</comment>
<comment type="subunit">
    <text evidence="1">F-type ATPases have 2 components, CF(1) - the catalytic core - and CF(0) - the membrane proton channel. CF(1) has five subunits: alpha(3), beta(3), gamma(1), delta(1), epsilon(1). CF(0) has three main subunits: a(1), b(2) and c(9-12). The alpha and beta chains form an alternating ring which encloses part of the gamma chain. CF(1) is attached to CF(0) by a central stalk formed by the gamma and epsilon chains, while a peripheral stalk is formed by the delta and b chains.</text>
</comment>
<comment type="subcellular location">
    <subcellularLocation>
        <location evidence="1">Cell membrane</location>
        <topology evidence="1">Multi-pass membrane protein</topology>
    </subcellularLocation>
</comment>
<comment type="similarity">
    <text evidence="1">Belongs to the ATPase A chain family.</text>
</comment>
<feature type="chain" id="PRO_1000215155" description="ATP synthase subunit a">
    <location>
        <begin position="1"/>
        <end position="238"/>
    </location>
</feature>
<feature type="transmembrane region" description="Helical" evidence="1">
    <location>
        <begin position="18"/>
        <end position="38"/>
    </location>
</feature>
<feature type="transmembrane region" description="Helical" evidence="1">
    <location>
        <begin position="76"/>
        <end position="96"/>
    </location>
</feature>
<feature type="transmembrane region" description="Helical" evidence="1">
    <location>
        <begin position="114"/>
        <end position="134"/>
    </location>
</feature>
<feature type="transmembrane region" description="Helical" evidence="1">
    <location>
        <begin position="166"/>
        <end position="186"/>
    </location>
</feature>
<feature type="transmembrane region" description="Helical" evidence="1">
    <location>
        <begin position="193"/>
        <end position="213"/>
    </location>
</feature>
<name>ATP6_STRS7</name>
<evidence type="ECO:0000255" key="1">
    <source>
        <dbReference type="HAMAP-Rule" id="MF_01393"/>
    </source>
</evidence>
<sequence length="238" mass="26902">MEEAKVPMVELGPITFNLTLLAVCIVTILLIFGFVFWASRQMTLKPKGKQTALEYLISFVNGIGEEHLDSHLQKSYSLLLFTIFLFVAVANNLGLFTKLETTSGYNLWTSPTANLAFDLALSLFVTLLVHIEGIRRRGFGAYLKRFATPWPMTPMNLLEEFTNFLSLAIRLFGNIFAGEVVTGLIVQLANYRLYWWPIAFLVNIAWTAFSIFISCIQAFVFTKLTATYLGKKVNESEE</sequence>
<reference key="1">
    <citation type="journal article" date="2009" name="PLoS Pathog.">
        <title>Genomic evidence for the evolution of Streptococcus equi: host restriction, increased virulence, and genetic exchange with human pathogens.</title>
        <authorList>
            <person name="Holden M.T.G."/>
            <person name="Heather Z."/>
            <person name="Paillot R."/>
            <person name="Steward K.F."/>
            <person name="Webb K."/>
            <person name="Ainslie F."/>
            <person name="Jourdan T."/>
            <person name="Bason N.C."/>
            <person name="Holroyd N.E."/>
            <person name="Mungall K."/>
            <person name="Quail M.A."/>
            <person name="Sanders M."/>
            <person name="Simmonds M."/>
            <person name="Willey D."/>
            <person name="Brooks K."/>
            <person name="Aanensen D.M."/>
            <person name="Spratt B.G."/>
            <person name="Jolley K.A."/>
            <person name="Maiden M.C.J."/>
            <person name="Kehoe M."/>
            <person name="Chanter N."/>
            <person name="Bentley S.D."/>
            <person name="Robinson C."/>
            <person name="Maskell D.J."/>
            <person name="Parkhill J."/>
            <person name="Waller A.S."/>
        </authorList>
    </citation>
    <scope>NUCLEOTIDE SEQUENCE [LARGE SCALE GENOMIC DNA]</scope>
    <source>
        <strain>H70</strain>
    </source>
</reference>
<proteinExistence type="inferred from homology"/>
<organism>
    <name type="scientific">Streptococcus equi subsp. zooepidemicus (strain H70)</name>
    <dbReference type="NCBI Taxonomy" id="553483"/>
    <lineage>
        <taxon>Bacteria</taxon>
        <taxon>Bacillati</taxon>
        <taxon>Bacillota</taxon>
        <taxon>Bacilli</taxon>
        <taxon>Lactobacillales</taxon>
        <taxon>Streptococcaceae</taxon>
        <taxon>Streptococcus</taxon>
    </lineage>
</organism>
<protein>
    <recommendedName>
        <fullName evidence="1">ATP synthase subunit a</fullName>
    </recommendedName>
    <alternativeName>
        <fullName evidence="1">ATP synthase F0 sector subunit a</fullName>
    </alternativeName>
    <alternativeName>
        <fullName evidence="1">F-ATPase subunit 6</fullName>
    </alternativeName>
</protein>
<dbReference type="EMBL" id="FM204884">
    <property type="protein sequence ID" value="CAW99610.1"/>
    <property type="molecule type" value="Genomic_DNA"/>
</dbReference>
<dbReference type="SMR" id="C0MH74"/>
<dbReference type="KEGG" id="seq:SZO_11680"/>
<dbReference type="eggNOG" id="COG0356">
    <property type="taxonomic scope" value="Bacteria"/>
</dbReference>
<dbReference type="HOGENOM" id="CLU_041018_2_3_9"/>
<dbReference type="Proteomes" id="UP000001368">
    <property type="component" value="Chromosome"/>
</dbReference>
<dbReference type="GO" id="GO:0005886">
    <property type="term" value="C:plasma membrane"/>
    <property type="evidence" value="ECO:0007669"/>
    <property type="project" value="UniProtKB-SubCell"/>
</dbReference>
<dbReference type="GO" id="GO:0045259">
    <property type="term" value="C:proton-transporting ATP synthase complex"/>
    <property type="evidence" value="ECO:0007669"/>
    <property type="project" value="UniProtKB-KW"/>
</dbReference>
<dbReference type="GO" id="GO:0046933">
    <property type="term" value="F:proton-transporting ATP synthase activity, rotational mechanism"/>
    <property type="evidence" value="ECO:0007669"/>
    <property type="project" value="UniProtKB-UniRule"/>
</dbReference>
<dbReference type="GO" id="GO:0042777">
    <property type="term" value="P:proton motive force-driven plasma membrane ATP synthesis"/>
    <property type="evidence" value="ECO:0007669"/>
    <property type="project" value="TreeGrafter"/>
</dbReference>
<dbReference type="CDD" id="cd00310">
    <property type="entry name" value="ATP-synt_Fo_a_6"/>
    <property type="match status" value="1"/>
</dbReference>
<dbReference type="Gene3D" id="1.20.120.220">
    <property type="entry name" value="ATP synthase, F0 complex, subunit A"/>
    <property type="match status" value="1"/>
</dbReference>
<dbReference type="HAMAP" id="MF_01393">
    <property type="entry name" value="ATP_synth_a_bact"/>
    <property type="match status" value="1"/>
</dbReference>
<dbReference type="InterPro" id="IPR045082">
    <property type="entry name" value="ATP_syn_F0_a_bact/chloroplast"/>
</dbReference>
<dbReference type="InterPro" id="IPR000568">
    <property type="entry name" value="ATP_synth_F0_asu"/>
</dbReference>
<dbReference type="InterPro" id="IPR023011">
    <property type="entry name" value="ATP_synth_F0_asu_AS"/>
</dbReference>
<dbReference type="InterPro" id="IPR035908">
    <property type="entry name" value="F0_ATP_A_sf"/>
</dbReference>
<dbReference type="NCBIfam" id="TIGR01131">
    <property type="entry name" value="ATP_synt_6_or_A"/>
    <property type="match status" value="1"/>
</dbReference>
<dbReference type="NCBIfam" id="NF004479">
    <property type="entry name" value="PRK05815.1-4"/>
    <property type="match status" value="1"/>
</dbReference>
<dbReference type="PANTHER" id="PTHR42823">
    <property type="entry name" value="ATP SYNTHASE SUBUNIT A, CHLOROPLASTIC"/>
    <property type="match status" value="1"/>
</dbReference>
<dbReference type="PANTHER" id="PTHR42823:SF3">
    <property type="entry name" value="ATP SYNTHASE SUBUNIT A, CHLOROPLASTIC"/>
    <property type="match status" value="1"/>
</dbReference>
<dbReference type="Pfam" id="PF00119">
    <property type="entry name" value="ATP-synt_A"/>
    <property type="match status" value="1"/>
</dbReference>
<dbReference type="PRINTS" id="PR00123">
    <property type="entry name" value="ATPASEA"/>
</dbReference>
<dbReference type="SUPFAM" id="SSF81336">
    <property type="entry name" value="F1F0 ATP synthase subunit A"/>
    <property type="match status" value="1"/>
</dbReference>
<dbReference type="PROSITE" id="PS00449">
    <property type="entry name" value="ATPASE_A"/>
    <property type="match status" value="1"/>
</dbReference>